<proteinExistence type="inferred from homology"/>
<gene>
    <name type="primary">U38</name>
    <name type="synonym">XILF0</name>
</gene>
<keyword id="KW-0235">DNA replication</keyword>
<keyword id="KW-0238">DNA-binding</keyword>
<keyword id="KW-0239">DNA-directed DNA polymerase</keyword>
<keyword id="KW-1048">Host nucleus</keyword>
<keyword id="KW-0548">Nucleotidyltransferase</keyword>
<keyword id="KW-1185">Reference proteome</keyword>
<keyword id="KW-0808">Transferase</keyword>
<keyword id="KW-1194">Viral DNA replication</keyword>
<reference key="1">
    <citation type="journal article" date="1991" name="J. Virol.">
        <title>Characterization of the DNA polymerase gene of human herpesvirus 6.</title>
        <authorList>
            <person name="Teo I.A."/>
            <person name="Griffin B.E."/>
            <person name="Jones M.D."/>
        </authorList>
    </citation>
    <scope>NUCLEOTIDE SEQUENCE [GENOMIC DNA]</scope>
</reference>
<reference key="2">
    <citation type="journal article" date="1995" name="Virology">
        <title>The DNA sequence of human herpesvirus-6: structure, coding content, and genome evolution.</title>
        <authorList>
            <person name="Gompels U.A."/>
            <person name="Nicholas J."/>
            <person name="Lawrence G.L."/>
            <person name="Jones M."/>
            <person name="Thomson B.J."/>
            <person name="Martin M.E.D."/>
            <person name="Efstathiou S."/>
            <person name="Craxton M.A."/>
            <person name="Macaulay H.A."/>
        </authorList>
    </citation>
    <scope>NUCLEOTIDE SEQUENCE [LARGE SCALE GENOMIC DNA]</scope>
</reference>
<reference key="3">
    <citation type="journal article" date="1994" name="J. Virol.">
        <title>Nucleotide sequence analysis of a 38.5-kilobase-pair region of the genome of human herpesvirus 6 encoding human cytomegalovirus immediate-early gene homologs and transactivating functions.</title>
        <authorList>
            <person name="Nicholas J."/>
            <person name="Martin M.E.D."/>
        </authorList>
    </citation>
    <scope>NUCLEOTIDE SEQUENCE [GENOMIC DNA] OF 778-1012</scope>
</reference>
<accession>P28857</accession>
<accession>Q69061</accession>
<organism>
    <name type="scientific">Human herpesvirus 6A (strain Uganda-1102)</name>
    <name type="common">HHV-6 variant A</name>
    <name type="synonym">Human B lymphotropic virus</name>
    <dbReference type="NCBI Taxonomy" id="10370"/>
    <lineage>
        <taxon>Viruses</taxon>
        <taxon>Duplodnaviria</taxon>
        <taxon>Heunggongvirae</taxon>
        <taxon>Peploviricota</taxon>
        <taxon>Herviviricetes</taxon>
        <taxon>Herpesvirales</taxon>
        <taxon>Orthoherpesviridae</taxon>
        <taxon>Betaherpesvirinae</taxon>
        <taxon>Roseolovirus</taxon>
        <taxon>Roseolovirus humanbeta6a</taxon>
        <taxon>Human betaherpesvirus 6A</taxon>
    </lineage>
</organism>
<comment type="catalytic activity">
    <reaction>
        <text>DNA(n) + a 2'-deoxyribonucleoside 5'-triphosphate = DNA(n+1) + diphosphate</text>
        <dbReference type="Rhea" id="RHEA:22508"/>
        <dbReference type="Rhea" id="RHEA-COMP:17339"/>
        <dbReference type="Rhea" id="RHEA-COMP:17340"/>
        <dbReference type="ChEBI" id="CHEBI:33019"/>
        <dbReference type="ChEBI" id="CHEBI:61560"/>
        <dbReference type="ChEBI" id="CHEBI:173112"/>
        <dbReference type="EC" id="2.7.7.7"/>
    </reaction>
</comment>
<comment type="subcellular location">
    <subcellularLocation>
        <location>Host nucleus</location>
    </subcellularLocation>
</comment>
<comment type="similarity">
    <text evidence="1">Belongs to the DNA polymerase type-B family.</text>
</comment>
<sequence length="1012" mass="115820">MDSVSFFNPYLEANRLKKKSRSSYIRILPRGIMHDGAAGLIKDVCDSEPRMFYRDRQYLLSKEMTWPSLDIARSKDYDHMRMKFHIYDAVETLMFTDSIENLPFQYRHFVIPSGTVIRMFGRTEDGEKICVNVFGQEQYFYCECVDGRSLKATINNLMLTGEVKMSCSFVIEPADKLSLYGYNANTVVNLFKVSFGNFYVSQRIGKILQNEGFVVYEIDVDVLTRFFVDNGFLSFGWYNVKKYIPQDMGKGSNLEVEINCHVSDLVSLEDVNWPLYGCWSFDIECLGQNGNFPDAENLGDIVIQISVISFDTEGDRDERHLFTLGTCEKIDGVHIYEFASEFELLLGFFIFLRIESPEFITGYNINNFDLKYLCIRMDKIYHYDIGCFSKLKNGKIGISVPHEQYRKGFLQAQTKVFTSGVLYLDMYPVYSSKITAQNYKLDTIAKICLQQEKEQLSYKEIPKKFISGPSGRAVVGKYCLQDSVLVVRLFKQINYHFEVAEVARLAHVTARCVVFEGQQKKIFPCILTEAKRRNMILPSMVSSHNRQGIGYKGATVLEPKTGYYAVPTVVFDFQSLYPSIMMAHNLCYSTLVLDERQIAGLSESDILTVKLGDETHRFVKPCIRESVLGSLLKDWLAKRREVKAEMQNCSDPMMKLLLDKKQLALKTTCNSVYGVTGAAHGLLPCVAIAASVTCLGREMLCSTVDYVNSKMQSEQFFCEEFGLTSSDFTGDLEVEVIYGDTDSIFMSVRNMVNQSLRRIAPMIAKHITDRLFKSPIKLEFEKILCPLILICKKRYIGRQDDSLLIFKGVDLVRKTSCDFVKGVVKDIVDLLFFDEEVQTAAVEFSHMTQTQLREQGVPVGIHKILRRLCEAREELFQNRADVRHLMLSSVLSKEMAAYKQPNLAHLSVIRRLAQRKEEIPNVGDRIMYVLIAPSIGNKQTHNYELAEDPNYVIEHKIPIHAEKYFDQIIKAVTNAISPIFPKTDIKKEKLLLYLLPMKVYLDETFSAIAEVM</sequence>
<name>DPOL_HHV6U</name>
<organismHost>
    <name type="scientific">Homo sapiens</name>
    <name type="common">Human</name>
    <dbReference type="NCBI Taxonomy" id="9606"/>
</organismHost>
<protein>
    <recommendedName>
        <fullName>DNA polymerase catalytic subunit</fullName>
        <ecNumber>2.7.7.7</ecNumber>
    </recommendedName>
</protein>
<dbReference type="EC" id="2.7.7.7"/>
<dbReference type="EMBL" id="M63804">
    <property type="protein sequence ID" value="AAA74631.1"/>
    <property type="molecule type" value="Genomic_DNA"/>
</dbReference>
<dbReference type="EMBL" id="X83413">
    <property type="protein sequence ID" value="CAA58372.1"/>
    <property type="molecule type" value="Genomic_DNA"/>
</dbReference>
<dbReference type="EMBL" id="L25528">
    <property type="protein sequence ID" value="AAA16745.1"/>
    <property type="molecule type" value="Genomic_DNA"/>
</dbReference>
<dbReference type="PIR" id="B40898">
    <property type="entry name" value="DJBE6S"/>
</dbReference>
<dbReference type="RefSeq" id="NP_042931.1">
    <property type="nucleotide sequence ID" value="NC_001664.2"/>
</dbReference>
<dbReference type="SMR" id="P28857"/>
<dbReference type="BindingDB" id="P28857"/>
<dbReference type="ChEMBL" id="CHEMBL4009"/>
<dbReference type="GeneID" id="1487916"/>
<dbReference type="KEGG" id="vg:1487916"/>
<dbReference type="Proteomes" id="UP000009295">
    <property type="component" value="Segment"/>
</dbReference>
<dbReference type="GO" id="GO:0042025">
    <property type="term" value="C:host cell nucleus"/>
    <property type="evidence" value="ECO:0007669"/>
    <property type="project" value="UniProtKB-SubCell"/>
</dbReference>
<dbReference type="GO" id="GO:0003677">
    <property type="term" value="F:DNA binding"/>
    <property type="evidence" value="ECO:0007669"/>
    <property type="project" value="UniProtKB-KW"/>
</dbReference>
<dbReference type="GO" id="GO:0003887">
    <property type="term" value="F:DNA-directed DNA polymerase activity"/>
    <property type="evidence" value="ECO:0007669"/>
    <property type="project" value="UniProtKB-KW"/>
</dbReference>
<dbReference type="GO" id="GO:0000166">
    <property type="term" value="F:nucleotide binding"/>
    <property type="evidence" value="ECO:0007669"/>
    <property type="project" value="InterPro"/>
</dbReference>
<dbReference type="GO" id="GO:0006261">
    <property type="term" value="P:DNA-templated DNA replication"/>
    <property type="evidence" value="ECO:0007669"/>
    <property type="project" value="TreeGrafter"/>
</dbReference>
<dbReference type="GO" id="GO:0039693">
    <property type="term" value="P:viral DNA genome replication"/>
    <property type="evidence" value="ECO:0007669"/>
    <property type="project" value="UniProtKB-KW"/>
</dbReference>
<dbReference type="Gene3D" id="1.10.132.60">
    <property type="entry name" value="DNA polymerase family B, C-terminal domain"/>
    <property type="match status" value="1"/>
</dbReference>
<dbReference type="Gene3D" id="3.30.342.10">
    <property type="entry name" value="DNA Polymerase, chain B, domain 1"/>
    <property type="match status" value="1"/>
</dbReference>
<dbReference type="Gene3D" id="1.10.287.690">
    <property type="entry name" value="Helix hairpin bin"/>
    <property type="match status" value="1"/>
</dbReference>
<dbReference type="Gene3D" id="3.90.1600.10">
    <property type="entry name" value="Palm domain of DNA polymerase"/>
    <property type="match status" value="1"/>
</dbReference>
<dbReference type="Gene3D" id="3.30.420.10">
    <property type="entry name" value="Ribonuclease H-like superfamily/Ribonuclease H"/>
    <property type="match status" value="1"/>
</dbReference>
<dbReference type="InterPro" id="IPR006172">
    <property type="entry name" value="DNA-dir_DNA_pol_B"/>
</dbReference>
<dbReference type="InterPro" id="IPR017964">
    <property type="entry name" value="DNA-dir_DNA_pol_B_CS"/>
</dbReference>
<dbReference type="InterPro" id="IPR006133">
    <property type="entry name" value="DNA-dir_DNA_pol_B_exonuc"/>
</dbReference>
<dbReference type="InterPro" id="IPR006134">
    <property type="entry name" value="DNA-dir_DNA_pol_B_multi_dom"/>
</dbReference>
<dbReference type="InterPro" id="IPR043502">
    <property type="entry name" value="DNA/RNA_pol_sf"/>
</dbReference>
<dbReference type="InterPro" id="IPR042087">
    <property type="entry name" value="DNA_pol_B_thumb"/>
</dbReference>
<dbReference type="InterPro" id="IPR023211">
    <property type="entry name" value="DNA_pol_palm_dom_sf"/>
</dbReference>
<dbReference type="InterPro" id="IPR050240">
    <property type="entry name" value="DNA_pol_type-B"/>
</dbReference>
<dbReference type="InterPro" id="IPR012337">
    <property type="entry name" value="RNaseH-like_sf"/>
</dbReference>
<dbReference type="InterPro" id="IPR036397">
    <property type="entry name" value="RNaseH_sf"/>
</dbReference>
<dbReference type="PANTHER" id="PTHR10322">
    <property type="entry name" value="DNA POLYMERASE CATALYTIC SUBUNIT"/>
    <property type="match status" value="1"/>
</dbReference>
<dbReference type="PANTHER" id="PTHR10322:SF23">
    <property type="entry name" value="DNA POLYMERASE DELTA CATALYTIC SUBUNIT"/>
    <property type="match status" value="1"/>
</dbReference>
<dbReference type="Pfam" id="PF00136">
    <property type="entry name" value="DNA_pol_B"/>
    <property type="match status" value="1"/>
</dbReference>
<dbReference type="Pfam" id="PF03104">
    <property type="entry name" value="DNA_pol_B_exo1"/>
    <property type="match status" value="1"/>
</dbReference>
<dbReference type="PRINTS" id="PR00106">
    <property type="entry name" value="DNAPOLB"/>
</dbReference>
<dbReference type="SMART" id="SM00486">
    <property type="entry name" value="POLBc"/>
    <property type="match status" value="1"/>
</dbReference>
<dbReference type="SUPFAM" id="SSF56672">
    <property type="entry name" value="DNA/RNA polymerases"/>
    <property type="match status" value="1"/>
</dbReference>
<dbReference type="SUPFAM" id="SSF53098">
    <property type="entry name" value="Ribonuclease H-like"/>
    <property type="match status" value="1"/>
</dbReference>
<dbReference type="PROSITE" id="PS00116">
    <property type="entry name" value="DNA_POLYMERASE_B"/>
    <property type="match status" value="1"/>
</dbReference>
<evidence type="ECO:0000305" key="1"/>
<feature type="chain" id="PRO_0000046516" description="DNA polymerase catalytic subunit">
    <location>
        <begin position="1"/>
        <end position="1012"/>
    </location>
</feature>